<feature type="chain" id="PRO_0000192451" description="Large-conductance mechanosensitive channel">
    <location>
        <begin position="1"/>
        <end position="154"/>
    </location>
</feature>
<feature type="transmembrane region" description="Helical" evidence="1">
    <location>
        <begin position="12"/>
        <end position="32"/>
    </location>
</feature>
<feature type="transmembrane region" description="Helical" evidence="1">
    <location>
        <begin position="71"/>
        <end position="91"/>
    </location>
</feature>
<feature type="region of interest" description="Disordered" evidence="2">
    <location>
        <begin position="129"/>
        <end position="154"/>
    </location>
</feature>
<name>MSCL_MYCLE</name>
<gene>
    <name evidence="1" type="primary">mscL</name>
    <name type="ordered locus">ML0178</name>
    <name type="ORF">MLCB373.30c</name>
</gene>
<sequence>MFRGFKEFLSRGNIVDLAVAVVIGTAFTALITKFTDSIITPLINRVGVNQQTNISPLRIDIGGDQAIDLNIVLSAAINFLLIALVVYFLVVLPYTTIRKHGEVEQFDTDLIGNQVVLLAEIRDLLAQSNGAPSGRHVDTADLTPTPNHEPRADT</sequence>
<evidence type="ECO:0000255" key="1">
    <source>
        <dbReference type="HAMAP-Rule" id="MF_00115"/>
    </source>
</evidence>
<evidence type="ECO:0000256" key="2">
    <source>
        <dbReference type="SAM" id="MobiDB-lite"/>
    </source>
</evidence>
<evidence type="ECO:0000305" key="3"/>
<dbReference type="EMBL" id="AL035500">
    <property type="protein sequence ID" value="CAB36692.1"/>
    <property type="molecule type" value="Genomic_DNA"/>
</dbReference>
<dbReference type="EMBL" id="AL583917">
    <property type="protein sequence ID" value="CAC29686.1"/>
    <property type="molecule type" value="Genomic_DNA"/>
</dbReference>
<dbReference type="PIR" id="T45450">
    <property type="entry name" value="T45450"/>
</dbReference>
<dbReference type="RefSeq" id="NP_301254.1">
    <property type="nucleotide sequence ID" value="NC_002677.1"/>
</dbReference>
<dbReference type="RefSeq" id="WP_010907579.1">
    <property type="nucleotide sequence ID" value="NC_002677.1"/>
</dbReference>
<dbReference type="SMR" id="Q9Z5G4"/>
<dbReference type="STRING" id="272631.gene:17573993"/>
<dbReference type="KEGG" id="mle:ML0178"/>
<dbReference type="PATRIC" id="fig|272631.5.peg.283"/>
<dbReference type="Leproma" id="ML0178"/>
<dbReference type="eggNOG" id="COG1970">
    <property type="taxonomic scope" value="Bacteria"/>
</dbReference>
<dbReference type="HOGENOM" id="CLU_095787_1_1_11"/>
<dbReference type="OrthoDB" id="9810350at2"/>
<dbReference type="Proteomes" id="UP000000806">
    <property type="component" value="Chromosome"/>
</dbReference>
<dbReference type="GO" id="GO:0005886">
    <property type="term" value="C:plasma membrane"/>
    <property type="evidence" value="ECO:0007669"/>
    <property type="project" value="UniProtKB-SubCell"/>
</dbReference>
<dbReference type="GO" id="GO:0008381">
    <property type="term" value="F:mechanosensitive monoatomic ion channel activity"/>
    <property type="evidence" value="ECO:0007669"/>
    <property type="project" value="UniProtKB-UniRule"/>
</dbReference>
<dbReference type="Gene3D" id="1.20.5.220">
    <property type="match status" value="1"/>
</dbReference>
<dbReference type="Gene3D" id="1.10.1200.120">
    <property type="entry name" value="Large-conductance mechanosensitive channel, MscL, domain 1"/>
    <property type="match status" value="1"/>
</dbReference>
<dbReference type="HAMAP" id="MF_00115">
    <property type="entry name" value="MscL"/>
    <property type="match status" value="1"/>
</dbReference>
<dbReference type="InterPro" id="IPR019823">
    <property type="entry name" value="Mechanosensitive_channel_CS"/>
</dbReference>
<dbReference type="InterPro" id="IPR001185">
    <property type="entry name" value="MS_channel"/>
</dbReference>
<dbReference type="InterPro" id="IPR037673">
    <property type="entry name" value="MSC/AndL"/>
</dbReference>
<dbReference type="InterPro" id="IPR036019">
    <property type="entry name" value="MscL_channel"/>
</dbReference>
<dbReference type="NCBIfam" id="TIGR00220">
    <property type="entry name" value="mscL"/>
    <property type="match status" value="1"/>
</dbReference>
<dbReference type="NCBIfam" id="NF001842">
    <property type="entry name" value="PRK00567.1-3"/>
    <property type="match status" value="1"/>
</dbReference>
<dbReference type="PANTHER" id="PTHR30266:SF2">
    <property type="entry name" value="LARGE-CONDUCTANCE MECHANOSENSITIVE CHANNEL"/>
    <property type="match status" value="1"/>
</dbReference>
<dbReference type="PANTHER" id="PTHR30266">
    <property type="entry name" value="MECHANOSENSITIVE CHANNEL MSCL"/>
    <property type="match status" value="1"/>
</dbReference>
<dbReference type="Pfam" id="PF01741">
    <property type="entry name" value="MscL"/>
    <property type="match status" value="1"/>
</dbReference>
<dbReference type="PRINTS" id="PR01264">
    <property type="entry name" value="MECHCHANNEL"/>
</dbReference>
<dbReference type="SUPFAM" id="SSF81330">
    <property type="entry name" value="Gated mechanosensitive channel"/>
    <property type="match status" value="1"/>
</dbReference>
<dbReference type="PROSITE" id="PS01327">
    <property type="entry name" value="MSCL"/>
    <property type="match status" value="1"/>
</dbReference>
<keyword id="KW-1003">Cell membrane</keyword>
<keyword id="KW-0407">Ion channel</keyword>
<keyword id="KW-0406">Ion transport</keyword>
<keyword id="KW-0472">Membrane</keyword>
<keyword id="KW-1185">Reference proteome</keyword>
<keyword id="KW-0812">Transmembrane</keyword>
<keyword id="KW-1133">Transmembrane helix</keyword>
<keyword id="KW-0813">Transport</keyword>
<comment type="function">
    <text evidence="1">Channel that opens in response to stretch forces in the membrane lipid bilayer. May participate in the regulation of osmotic pressure changes within the cell.</text>
</comment>
<comment type="subunit">
    <text evidence="1">Homopentamer.</text>
</comment>
<comment type="subcellular location">
    <subcellularLocation>
        <location evidence="1">Cell membrane</location>
        <topology evidence="1">Multi-pass membrane protein</topology>
    </subcellularLocation>
</comment>
<comment type="similarity">
    <text evidence="1 3">Belongs to the MscL family.</text>
</comment>
<accession>Q9Z5G4</accession>
<protein>
    <recommendedName>
        <fullName evidence="1">Large-conductance mechanosensitive channel</fullName>
    </recommendedName>
</protein>
<proteinExistence type="inferred from homology"/>
<organism>
    <name type="scientific">Mycobacterium leprae (strain TN)</name>
    <dbReference type="NCBI Taxonomy" id="272631"/>
    <lineage>
        <taxon>Bacteria</taxon>
        <taxon>Bacillati</taxon>
        <taxon>Actinomycetota</taxon>
        <taxon>Actinomycetes</taxon>
        <taxon>Mycobacteriales</taxon>
        <taxon>Mycobacteriaceae</taxon>
        <taxon>Mycobacterium</taxon>
    </lineage>
</organism>
<reference key="1">
    <citation type="journal article" date="2001" name="Nature">
        <title>Massive gene decay in the leprosy bacillus.</title>
        <authorList>
            <person name="Cole S.T."/>
            <person name="Eiglmeier K."/>
            <person name="Parkhill J."/>
            <person name="James K.D."/>
            <person name="Thomson N.R."/>
            <person name="Wheeler P.R."/>
            <person name="Honore N."/>
            <person name="Garnier T."/>
            <person name="Churcher C.M."/>
            <person name="Harris D.E."/>
            <person name="Mungall K.L."/>
            <person name="Basham D."/>
            <person name="Brown D."/>
            <person name="Chillingworth T."/>
            <person name="Connor R."/>
            <person name="Davies R.M."/>
            <person name="Devlin K."/>
            <person name="Duthoy S."/>
            <person name="Feltwell T."/>
            <person name="Fraser A."/>
            <person name="Hamlin N."/>
            <person name="Holroyd S."/>
            <person name="Hornsby T."/>
            <person name="Jagels K."/>
            <person name="Lacroix C."/>
            <person name="Maclean J."/>
            <person name="Moule S."/>
            <person name="Murphy L.D."/>
            <person name="Oliver K."/>
            <person name="Quail M.A."/>
            <person name="Rajandream M.A."/>
            <person name="Rutherford K.M."/>
            <person name="Rutter S."/>
            <person name="Seeger K."/>
            <person name="Simon S."/>
            <person name="Simmonds M."/>
            <person name="Skelton J."/>
            <person name="Squares R."/>
            <person name="Squares S."/>
            <person name="Stevens K."/>
            <person name="Taylor K."/>
            <person name="Whitehead S."/>
            <person name="Woodward J.R."/>
            <person name="Barrell B.G."/>
        </authorList>
    </citation>
    <scope>NUCLEOTIDE SEQUENCE [LARGE SCALE GENOMIC DNA]</scope>
    <source>
        <strain>TN</strain>
    </source>
</reference>